<reference key="1">
    <citation type="submission" date="1996-09" db="EMBL/GenBank/DDBJ databases">
        <title>Structure of the Arabidopsis thaliana Em1 locus.</title>
        <authorList>
            <person name="Grellet F."/>
            <person name="Gaubier P."/>
            <person name="Wu H.-J."/>
            <person name="Laudie M."/>
            <person name="Berger C."/>
            <person name="Delseny M."/>
        </authorList>
    </citation>
    <scope>NUCLEOTIDE SEQUENCE [MRNA]</scope>
    <source>
        <strain>cv. Columbia</strain>
    </source>
</reference>
<reference key="2">
    <citation type="journal article" date="1999" name="Plant Mol. Biol.">
        <title>Fine sequence analysis of 60 kb around the Arabidopsis thaliana AtEm1 locus on chromosome III.</title>
        <authorList>
            <person name="Comella P."/>
            <person name="Wu H.-J."/>
            <person name="Laudie M."/>
            <person name="Berger C."/>
            <person name="Cooke R."/>
            <person name="Delseny M."/>
            <person name="Grellet F."/>
        </authorList>
    </citation>
    <scope>NUCLEOTIDE SEQUENCE [LARGE SCALE GENOMIC DNA]</scope>
    <source>
        <strain>cv. Columbia</strain>
    </source>
</reference>
<reference key="3">
    <citation type="journal article" date="2017" name="Plant J.">
        <title>Araport11: a complete reannotation of the Arabidopsis thaliana reference genome.</title>
        <authorList>
            <person name="Cheng C.Y."/>
            <person name="Krishnakumar V."/>
            <person name="Chan A.P."/>
            <person name="Thibaud-Nissen F."/>
            <person name="Schobel S."/>
            <person name="Town C.D."/>
        </authorList>
    </citation>
    <scope>GENOME REANNOTATION</scope>
    <source>
        <strain>cv. Columbia</strain>
    </source>
</reference>
<reference key="4">
    <citation type="journal article" date="2003" name="Science">
        <title>Empirical analysis of transcriptional activity in the Arabidopsis genome.</title>
        <authorList>
            <person name="Yamada K."/>
            <person name="Lim J."/>
            <person name="Dale J.M."/>
            <person name="Chen H."/>
            <person name="Shinn P."/>
            <person name="Palm C.J."/>
            <person name="Southwick A.M."/>
            <person name="Wu H.C."/>
            <person name="Kim C.J."/>
            <person name="Nguyen M."/>
            <person name="Pham P.K."/>
            <person name="Cheuk R.F."/>
            <person name="Karlin-Newmann G."/>
            <person name="Liu S.X."/>
            <person name="Lam B."/>
            <person name="Sakano H."/>
            <person name="Wu T."/>
            <person name="Yu G."/>
            <person name="Miranda M."/>
            <person name="Quach H.L."/>
            <person name="Tripp M."/>
            <person name="Chang C.H."/>
            <person name="Lee J.M."/>
            <person name="Toriumi M.J."/>
            <person name="Chan M.M."/>
            <person name="Tang C.C."/>
            <person name="Onodera C.S."/>
            <person name="Deng J.M."/>
            <person name="Akiyama K."/>
            <person name="Ansari Y."/>
            <person name="Arakawa T."/>
            <person name="Banh J."/>
            <person name="Banno F."/>
            <person name="Bowser L."/>
            <person name="Brooks S.Y."/>
            <person name="Carninci P."/>
            <person name="Chao Q."/>
            <person name="Choy N."/>
            <person name="Enju A."/>
            <person name="Goldsmith A.D."/>
            <person name="Gurjal M."/>
            <person name="Hansen N.F."/>
            <person name="Hayashizaki Y."/>
            <person name="Johnson-Hopson C."/>
            <person name="Hsuan V.W."/>
            <person name="Iida K."/>
            <person name="Karnes M."/>
            <person name="Khan S."/>
            <person name="Koesema E."/>
            <person name="Ishida J."/>
            <person name="Jiang P.X."/>
            <person name="Jones T."/>
            <person name="Kawai J."/>
            <person name="Kamiya A."/>
            <person name="Meyers C."/>
            <person name="Nakajima M."/>
            <person name="Narusaka M."/>
            <person name="Seki M."/>
            <person name="Sakurai T."/>
            <person name="Satou M."/>
            <person name="Tamse R."/>
            <person name="Vaysberg M."/>
            <person name="Wallender E.K."/>
            <person name="Wong C."/>
            <person name="Yamamura Y."/>
            <person name="Yuan S."/>
            <person name="Shinozaki K."/>
            <person name="Davis R.W."/>
            <person name="Theologis A."/>
            <person name="Ecker J.R."/>
        </authorList>
    </citation>
    <scope>NUCLEOTIDE SEQUENCE [LARGE SCALE MRNA]</scope>
    <source>
        <strain>cv. Columbia</strain>
    </source>
</reference>
<reference key="5">
    <citation type="submission" date="2006-07" db="EMBL/GenBank/DDBJ databases">
        <title>Large-scale analysis of RIKEN Arabidopsis full-length (RAFL) cDNAs.</title>
        <authorList>
            <person name="Totoki Y."/>
            <person name="Seki M."/>
            <person name="Ishida J."/>
            <person name="Nakajima M."/>
            <person name="Enju A."/>
            <person name="Kamiya A."/>
            <person name="Narusaka M."/>
            <person name="Shin-i T."/>
            <person name="Nakagawa M."/>
            <person name="Sakamoto N."/>
            <person name="Oishi K."/>
            <person name="Kohara Y."/>
            <person name="Kobayashi M."/>
            <person name="Toyoda A."/>
            <person name="Sakaki Y."/>
            <person name="Sakurai T."/>
            <person name="Iida K."/>
            <person name="Akiyama K."/>
            <person name="Satou M."/>
            <person name="Toyoda T."/>
            <person name="Konagaya A."/>
            <person name="Carninci P."/>
            <person name="Kawai J."/>
            <person name="Hayashizaki Y."/>
            <person name="Shinozaki K."/>
        </authorList>
    </citation>
    <scope>NUCLEOTIDE SEQUENCE [LARGE SCALE MRNA]</scope>
    <source>
        <strain>cv. Columbia</strain>
    </source>
</reference>
<reference key="6">
    <citation type="journal article" date="2001" name="J. Biol. Chem.">
        <title>CCME, a nuclear-encoded heme-binding protein involved in cytochrome c maturation in plant mitochondria.</title>
        <authorList>
            <person name="Spielewoy N."/>
            <person name="Schulz H."/>
            <person name="Grienenberger J.M."/>
            <person name="Thony-Meyer L."/>
            <person name="Bonnard G."/>
        </authorList>
    </citation>
    <scope>FUNCTION</scope>
    <scope>SUBCELLULAR LOCATION</scope>
    <scope>HEME BINDING</scope>
    <scope>MUTAGENESIS OF HIS-222</scope>
</reference>
<keyword id="KW-0201">Cytochrome c-type biogenesis</keyword>
<keyword id="KW-0349">Heme</keyword>
<keyword id="KW-0408">Iron</keyword>
<keyword id="KW-0472">Membrane</keyword>
<keyword id="KW-0479">Metal-binding</keyword>
<keyword id="KW-0496">Mitochondrion</keyword>
<keyword id="KW-0999">Mitochondrion inner membrane</keyword>
<keyword id="KW-1185">Reference proteome</keyword>
<keyword id="KW-0809">Transit peptide</keyword>
<keyword id="KW-0812">Transmembrane</keyword>
<keyword id="KW-1133">Transmembrane helix</keyword>
<proteinExistence type="evidence at protein level"/>
<dbReference type="EMBL" id="U72502">
    <property type="protein sequence ID" value="AAB18126.1"/>
    <property type="molecule type" value="mRNA"/>
</dbReference>
<dbReference type="EMBL" id="AF049236">
    <property type="protein sequence ID" value="AAC14406.1"/>
    <property type="molecule type" value="Genomic_DNA"/>
</dbReference>
<dbReference type="EMBL" id="CP002686">
    <property type="protein sequence ID" value="AEE78843.1"/>
    <property type="molecule type" value="Genomic_DNA"/>
</dbReference>
<dbReference type="EMBL" id="BT004607">
    <property type="protein sequence ID" value="AAO42853.1"/>
    <property type="molecule type" value="mRNA"/>
</dbReference>
<dbReference type="EMBL" id="AK227474">
    <property type="protein sequence ID" value="BAE99476.1"/>
    <property type="molecule type" value="mRNA"/>
</dbReference>
<dbReference type="PIR" id="T51150">
    <property type="entry name" value="T51150"/>
</dbReference>
<dbReference type="SMR" id="Q96326"/>
<dbReference type="FunCoup" id="Q96326">
    <property type="interactions" value="9"/>
</dbReference>
<dbReference type="IntAct" id="Q96326">
    <property type="interactions" value="27"/>
</dbReference>
<dbReference type="STRING" id="3702.Q96326"/>
<dbReference type="iPTMnet" id="Q96326"/>
<dbReference type="PaxDb" id="3702-AT3G51790.1"/>
<dbReference type="ProteomicsDB" id="224444"/>
<dbReference type="EnsemblPlants" id="AT3G51790.1">
    <property type="protein sequence ID" value="AT3G51790.1"/>
    <property type="gene ID" value="AT3G51790"/>
</dbReference>
<dbReference type="GeneID" id="824342"/>
<dbReference type="Gramene" id="AT3G51790.1">
    <property type="protein sequence ID" value="AT3G51790.1"/>
    <property type="gene ID" value="AT3G51790"/>
</dbReference>
<dbReference type="KEGG" id="ath:AT3G51790"/>
<dbReference type="Araport" id="AT3G51790"/>
<dbReference type="TAIR" id="AT3G51790">
    <property type="gene designation" value="G1"/>
</dbReference>
<dbReference type="eggNOG" id="ENOG502QTHD">
    <property type="taxonomic scope" value="Eukaryota"/>
</dbReference>
<dbReference type="HOGENOM" id="CLU_079503_0_0_1"/>
<dbReference type="InParanoid" id="Q96326"/>
<dbReference type="OMA" id="NLDCFFS"/>
<dbReference type="PhylomeDB" id="Q96326"/>
<dbReference type="PRO" id="PR:Q96326"/>
<dbReference type="Proteomes" id="UP000006548">
    <property type="component" value="Chromosome 3"/>
</dbReference>
<dbReference type="ExpressionAtlas" id="Q96326">
    <property type="expression patterns" value="baseline and differential"/>
</dbReference>
<dbReference type="GO" id="GO:0005743">
    <property type="term" value="C:mitochondrial inner membrane"/>
    <property type="evidence" value="ECO:0000314"/>
    <property type="project" value="TAIR"/>
</dbReference>
<dbReference type="GO" id="GO:0005758">
    <property type="term" value="C:mitochondrial intermembrane space"/>
    <property type="evidence" value="ECO:0007669"/>
    <property type="project" value="UniProtKB-SubCell"/>
</dbReference>
<dbReference type="GO" id="GO:0005886">
    <property type="term" value="C:plasma membrane"/>
    <property type="evidence" value="ECO:0007669"/>
    <property type="project" value="InterPro"/>
</dbReference>
<dbReference type="GO" id="GO:0020037">
    <property type="term" value="F:heme binding"/>
    <property type="evidence" value="ECO:0000314"/>
    <property type="project" value="TAIR"/>
</dbReference>
<dbReference type="GO" id="GO:0046872">
    <property type="term" value="F:metal ion binding"/>
    <property type="evidence" value="ECO:0007669"/>
    <property type="project" value="UniProtKB-KW"/>
</dbReference>
<dbReference type="GO" id="GO:0017004">
    <property type="term" value="P:cytochrome complex assembly"/>
    <property type="evidence" value="ECO:0007669"/>
    <property type="project" value="UniProtKB-KW"/>
</dbReference>
<dbReference type="Gene3D" id="2.40.50.140">
    <property type="entry name" value="Nucleic acid-binding proteins"/>
    <property type="match status" value="1"/>
</dbReference>
<dbReference type="HAMAP" id="MF_01959">
    <property type="entry name" value="CcmE"/>
    <property type="match status" value="1"/>
</dbReference>
<dbReference type="InterPro" id="IPR004329">
    <property type="entry name" value="CcmE"/>
</dbReference>
<dbReference type="InterPro" id="IPR036127">
    <property type="entry name" value="CcmE-like_sf"/>
</dbReference>
<dbReference type="InterPro" id="IPR012340">
    <property type="entry name" value="NA-bd_OB-fold"/>
</dbReference>
<dbReference type="PANTHER" id="PTHR34128">
    <property type="entry name" value="CYTOCHROME C-TYPE BIOGENESIS PROTEIN CCME HOMOLOG, MITOCHONDRIAL"/>
    <property type="match status" value="1"/>
</dbReference>
<dbReference type="PANTHER" id="PTHR34128:SF2">
    <property type="entry name" value="CYTOCHROME C-TYPE BIOGENESIS PROTEIN CCME HOMOLOG, MITOCHONDRIAL"/>
    <property type="match status" value="1"/>
</dbReference>
<dbReference type="Pfam" id="PF03100">
    <property type="entry name" value="CcmE"/>
    <property type="match status" value="1"/>
</dbReference>
<dbReference type="SUPFAM" id="SSF82093">
    <property type="entry name" value="Heme chaperone CcmE"/>
    <property type="match status" value="1"/>
</dbReference>
<gene>
    <name evidence="5" type="primary">CCME</name>
    <name evidence="8" type="synonym">ATG1</name>
    <name evidence="7" type="ordered locus">At3g51790</name>
</gene>
<organism>
    <name type="scientific">Arabidopsis thaliana</name>
    <name type="common">Mouse-ear cress</name>
    <dbReference type="NCBI Taxonomy" id="3702"/>
    <lineage>
        <taxon>Eukaryota</taxon>
        <taxon>Viridiplantae</taxon>
        <taxon>Streptophyta</taxon>
        <taxon>Embryophyta</taxon>
        <taxon>Tracheophyta</taxon>
        <taxon>Spermatophyta</taxon>
        <taxon>Magnoliopsida</taxon>
        <taxon>eudicotyledons</taxon>
        <taxon>Gunneridae</taxon>
        <taxon>Pentapetalae</taxon>
        <taxon>rosids</taxon>
        <taxon>malvids</taxon>
        <taxon>Brassicales</taxon>
        <taxon>Brassicaceae</taxon>
        <taxon>Camelineae</taxon>
        <taxon>Arabidopsis</taxon>
    </lineage>
</organism>
<evidence type="ECO:0000250" key="1">
    <source>
        <dbReference type="UniProtKB" id="P69490"/>
    </source>
</evidence>
<evidence type="ECO:0000255" key="2"/>
<evidence type="ECO:0000255" key="3">
    <source>
        <dbReference type="HAMAP-Rule" id="MF_01959"/>
    </source>
</evidence>
<evidence type="ECO:0000269" key="4">
    <source>
    </source>
</evidence>
<evidence type="ECO:0000303" key="5">
    <source>
    </source>
</evidence>
<evidence type="ECO:0000305" key="6"/>
<evidence type="ECO:0000312" key="7">
    <source>
        <dbReference type="Araport" id="AT3G51790"/>
    </source>
</evidence>
<evidence type="ECO:0000312" key="8">
    <source>
        <dbReference type="EMBL" id="AAB18126.1"/>
    </source>
</evidence>
<protein>
    <recommendedName>
        <fullName evidence="6">Cytochrome c-type biogenesis protein CcmE homolog, mitochondrial</fullName>
    </recommendedName>
    <alternativeName>
        <fullName evidence="6">Cytochrome c maturation protein E homolog</fullName>
        <shortName evidence="5">AtCCME</shortName>
    </alternativeName>
    <alternativeName>
        <fullName evidence="6">Heme chaperone CcmE homolog</fullName>
    </alternativeName>
</protein>
<name>CCME_ARATH</name>
<comment type="function">
    <text evidence="4">Heme-binding chaperone that may be involved in cytochrome c maturation in mitochondria.</text>
</comment>
<comment type="subcellular location">
    <subcellularLocation>
        <location evidence="4">Mitochondrion inner membrane</location>
        <topology evidence="2">Single-pass membrane protein</topology>
    </subcellularLocation>
    <subcellularLocation>
        <location evidence="4">Mitochondrion intermembrane space</location>
    </subcellularLocation>
    <text evidence="4">According to some authors, CCME is a peripheral mitochondrion inner membrane protein with the hydrophilic domain oriented toward the mitochondrion intermembrane space (PubMed:11069919).</text>
</comment>
<comment type="similarity">
    <text evidence="3">Belongs to the CcmE/CycJ family.</text>
</comment>
<feature type="transit peptide" description="Mitochondrion" evidence="2">
    <location>
        <begin position="1"/>
        <end position="57"/>
    </location>
</feature>
<feature type="chain" id="PRO_0000443062" description="Cytochrome c-type biogenesis protein CcmE homolog, mitochondrial" evidence="2">
    <location>
        <begin position="58"/>
        <end position="256"/>
    </location>
</feature>
<feature type="transmembrane region" description="Helical" evidence="2">
    <location>
        <begin position="84"/>
        <end position="106"/>
    </location>
</feature>
<feature type="binding site" description="covalent" evidence="4">
    <location>
        <position position="222"/>
    </location>
    <ligand>
        <name>heme</name>
        <dbReference type="ChEBI" id="CHEBI:30413"/>
    </ligand>
</feature>
<feature type="binding site" description="axial binding residue" evidence="1">
    <location>
        <position position="226"/>
    </location>
    <ligand>
        <name>heme</name>
        <dbReference type="ChEBI" id="CHEBI:30413"/>
    </ligand>
    <ligandPart>
        <name>Fe</name>
        <dbReference type="ChEBI" id="CHEBI:18248"/>
    </ligandPart>
</feature>
<feature type="mutagenesis site" description="Abolishes heme binding." evidence="4">
    <original>H</original>
    <variation>A</variation>
    <location>
        <position position="222"/>
    </location>
</feature>
<accession>Q96326</accession>
<sequence>MAARLLFRRSSQILRSIQRNPQISSSFESPPCPIFHSLTTASPDPSRLSSLTFLRSLSIARRGPTRPKKIDIGAKARQMQNRRLWTYALTFSCIAGFVVIVLNQFQDQLVFYLTPSDAMEKFAENPTKNKFRLGGLVLEGSVAQPAASQEMEFVITDLITDILVRYKGSLPDLFREGHSVVVEGFIKPYTDEVRKEVSTKPISKKARNLDCFFSATEVLAKHDEKYMPQEVAAAIEKNKKIIEAAATEQAAEVAAS</sequence>